<organismHost>
    <name type="scientific">Homo sapiens</name>
    <name type="common">Human</name>
    <dbReference type="NCBI Taxonomy" id="9606"/>
</organismHost>
<organism>
    <name type="scientific">Human papillomavirus 52</name>
    <dbReference type="NCBI Taxonomy" id="10618"/>
    <lineage>
        <taxon>Viruses</taxon>
        <taxon>Monodnaviria</taxon>
        <taxon>Shotokuvirae</taxon>
        <taxon>Cossaviricota</taxon>
        <taxon>Papovaviricetes</taxon>
        <taxon>Zurhausenvirales</taxon>
        <taxon>Papillomaviridae</taxon>
        <taxon>Firstpapillomavirinae</taxon>
        <taxon>Alphapapillomavirus</taxon>
        <taxon>Alphapapillomavirus 9</taxon>
    </lineage>
</organism>
<name>VE2_HPV52</name>
<reference key="1">
    <citation type="journal article" date="1994" name="Curr. Top. Microbiol. Immunol.">
        <title>Primer-directed sequencing of human papillomavirus types.</title>
        <authorList>
            <person name="Delius H."/>
            <person name="Hofmann B."/>
        </authorList>
    </citation>
    <scope>NUCLEOTIDE SEQUENCE [GENOMIC DNA]</scope>
</reference>
<comment type="function">
    <text evidence="1">Plays a role in the initiation of viral DNA replication. A dimer of E2 interacts with a dimer of E1 in order to improve specificity of E1 DNA binding activity. Once the complex recognizes and binds DNA at specific sites, the E2 dimer is removed from DNA. E2 also regulates viral transcription through binding to the E2RE response element (5'-ACCNNNNNNGGT-3') present in multiple copies in the regulatory regions of the viral genome. Activates or represses transcription depending on E2RE's position with regards to proximal promoter elements including the TATA-box. Repression occurs by sterically hindering the assembly of the transcription initiation complex.</text>
</comment>
<comment type="subunit">
    <text evidence="1">Binds DNA as homodimer. Interacts with protein E1; this interaction greatly increases E1 DNA-binding activity. Interacts with protein L1; this interaction enhances E2-dependent replication and transcription activation. Interacts with protein L2; this interaction inhibits E2 transcriptional activity but not DNA replication function E2. Interacts with protein E7; this interaction inhibits E7 oncogenic activity. Interacts with host TAF1; this interaction modulates E2-dependent transcriptional regulation. Interacts with host BRD4; this interaction mediates E2 transcriptional activation function. Additionally, the interaction with host BRD4 on mitotic chromosomes mediates tethering of the viral genome. Interacts with host TOPBP1; this interaction is required for optimal viral DNA replication.</text>
</comment>
<comment type="subcellular location">
    <subcellularLocation>
        <location evidence="1">Host nucleus</location>
    </subcellularLocation>
</comment>
<comment type="PTM">
    <text evidence="1">Phosphorylated.</text>
</comment>
<comment type="PTM">
    <text evidence="1">Sumoylation plays a regulatory role in E2 transcriptional activity.</text>
</comment>
<comment type="similarity">
    <text evidence="1">Belongs to the papillomaviridae E2 protein family.</text>
</comment>
<accession>P36796</accession>
<dbReference type="EMBL" id="X74481">
    <property type="protein sequence ID" value="CAA52588.1"/>
    <property type="molecule type" value="Genomic_DNA"/>
</dbReference>
<dbReference type="PIR" id="S36576">
    <property type="entry name" value="S36576"/>
</dbReference>
<dbReference type="SMR" id="P36796"/>
<dbReference type="Proteomes" id="UP000008692">
    <property type="component" value="Genome"/>
</dbReference>
<dbReference type="GO" id="GO:0042025">
    <property type="term" value="C:host cell nucleus"/>
    <property type="evidence" value="ECO:0007669"/>
    <property type="project" value="UniProtKB-SubCell"/>
</dbReference>
<dbReference type="GO" id="GO:0003677">
    <property type="term" value="F:DNA binding"/>
    <property type="evidence" value="ECO:0007669"/>
    <property type="project" value="UniProtKB-UniRule"/>
</dbReference>
<dbReference type="GO" id="GO:0003700">
    <property type="term" value="F:DNA-binding transcription factor activity"/>
    <property type="evidence" value="ECO:0007669"/>
    <property type="project" value="UniProtKB-UniRule"/>
</dbReference>
<dbReference type="GO" id="GO:0000166">
    <property type="term" value="F:nucleotide binding"/>
    <property type="evidence" value="ECO:0007669"/>
    <property type="project" value="UniProtKB-UniRule"/>
</dbReference>
<dbReference type="GO" id="GO:0006260">
    <property type="term" value="P:DNA replication"/>
    <property type="evidence" value="ECO:0007669"/>
    <property type="project" value="UniProtKB-KW"/>
</dbReference>
<dbReference type="GO" id="GO:0006351">
    <property type="term" value="P:DNA-templated transcription"/>
    <property type="evidence" value="ECO:0007669"/>
    <property type="project" value="UniProtKB-UniRule"/>
</dbReference>
<dbReference type="GO" id="GO:0006275">
    <property type="term" value="P:regulation of DNA replication"/>
    <property type="evidence" value="ECO:0007669"/>
    <property type="project" value="UniProtKB-UniRule"/>
</dbReference>
<dbReference type="GO" id="GO:0039693">
    <property type="term" value="P:viral DNA genome replication"/>
    <property type="evidence" value="ECO:0007669"/>
    <property type="project" value="UniProtKB-UniRule"/>
</dbReference>
<dbReference type="Gene3D" id="3.30.70.330">
    <property type="match status" value="1"/>
</dbReference>
<dbReference type="Gene3D" id="1.10.287.30">
    <property type="entry name" value="E2 (early) protein, N terminal domain, subdomain 1"/>
    <property type="match status" value="1"/>
</dbReference>
<dbReference type="Gene3D" id="2.170.200.10">
    <property type="entry name" value="Papillomavirus E2 early protein domain"/>
    <property type="match status" value="1"/>
</dbReference>
<dbReference type="HAMAP" id="MF_04001">
    <property type="entry name" value="PPV_E2"/>
    <property type="match status" value="1"/>
</dbReference>
<dbReference type="InterPro" id="IPR035975">
    <property type="entry name" value="E2/EBNA1_C_sf"/>
</dbReference>
<dbReference type="InterPro" id="IPR012677">
    <property type="entry name" value="Nucleotide-bd_a/b_plait_sf"/>
</dbReference>
<dbReference type="InterPro" id="IPR000427">
    <property type="entry name" value="Papillomavirus_E2_C"/>
</dbReference>
<dbReference type="InterPro" id="IPR001866">
    <property type="entry name" value="PPV_E2_N"/>
</dbReference>
<dbReference type="InterPro" id="IPR033668">
    <property type="entry name" value="Reg_prot_E2"/>
</dbReference>
<dbReference type="InterPro" id="IPR036050">
    <property type="entry name" value="Regulatory_protein_E2_N"/>
</dbReference>
<dbReference type="InterPro" id="IPR042503">
    <property type="entry name" value="Regulatory_protein_E2_N_1"/>
</dbReference>
<dbReference type="InterPro" id="IPR042504">
    <property type="entry name" value="Regulatory_protein_E2_N_2"/>
</dbReference>
<dbReference type="Pfam" id="PF00511">
    <property type="entry name" value="PPV_E2_C"/>
    <property type="match status" value="1"/>
</dbReference>
<dbReference type="Pfam" id="PF00508">
    <property type="entry name" value="PPV_E2_N"/>
    <property type="match status" value="1"/>
</dbReference>
<dbReference type="SUPFAM" id="SSF51332">
    <property type="entry name" value="E2 regulatory, transactivation domain"/>
    <property type="match status" value="1"/>
</dbReference>
<dbReference type="SUPFAM" id="SSF54957">
    <property type="entry name" value="Viral DNA-binding domain"/>
    <property type="match status" value="1"/>
</dbReference>
<sequence length="368" mass="41739">MESIPARLNAVQEKILDLYEADSNDLNAQIEHWKLTRMECVLFYKAKELGITHIGHQVVPPMAVSKAKACQAIELQLALEALNKTQYSTDGWTLQQTSLEMWRAEPQKYFKKHGYTITVQYDNDKNNTMDYTNWKEIYLLGECECTIVEGQVDYYGLYYWCDGEKIYFVKFSNDAKQYCVTGVWEVHVGGQVIVCPASVSSNEVSTTETAVHLCTETSKTSAVSVGAKDTHLQPPQKRRRPDVTDSRNTKYPNNLLRGQQSVDSTTRGLVTATECTNKGRVAHTTCTAPIIHLKGDPNSLKCLRYRVKTHKSLYVQISSTWHWTSNECTNNKLGIVTITYSDETQRQQFLKTVKIPNTVQVIQGVMSL</sequence>
<gene>
    <name evidence="1" type="primary">E2</name>
</gene>
<feature type="chain" id="PRO_0000133230" description="Regulatory protein E2">
    <location>
        <begin position="1"/>
        <end position="368"/>
    </location>
</feature>
<feature type="region of interest" description="Transactivation domain" evidence="1">
    <location>
        <begin position="1"/>
        <end position="200"/>
    </location>
</feature>
<feature type="region of interest" description="Disordered" evidence="2">
    <location>
        <begin position="225"/>
        <end position="255"/>
    </location>
</feature>
<feature type="region of interest" description="DNA-binding domain" evidence="1">
    <location>
        <begin position="287"/>
        <end position="368"/>
    </location>
</feature>
<feature type="cross-link" description="Glycyl lysine isopeptide (Lys-Gly) (interchain with G-Cter in SUMO)" evidence="1">
    <location>
        <position position="294"/>
    </location>
</feature>
<proteinExistence type="inferred from homology"/>
<keyword id="KW-0010">Activator</keyword>
<keyword id="KW-0235">DNA replication</keyword>
<keyword id="KW-0238">DNA-binding</keyword>
<keyword id="KW-0244">Early protein</keyword>
<keyword id="KW-1048">Host nucleus</keyword>
<keyword id="KW-1017">Isopeptide bond</keyword>
<keyword id="KW-0597">Phosphoprotein</keyword>
<keyword id="KW-0678">Repressor</keyword>
<keyword id="KW-0804">Transcription</keyword>
<keyword id="KW-0805">Transcription regulation</keyword>
<keyword id="KW-0832">Ubl conjugation</keyword>
<evidence type="ECO:0000255" key="1">
    <source>
        <dbReference type="HAMAP-Rule" id="MF_04001"/>
    </source>
</evidence>
<evidence type="ECO:0000256" key="2">
    <source>
        <dbReference type="SAM" id="MobiDB-lite"/>
    </source>
</evidence>
<protein>
    <recommendedName>
        <fullName evidence="1">Regulatory protein E2</fullName>
    </recommendedName>
</protein>